<accession>Q80942</accession>
<evidence type="ECO:0000255" key="1">
    <source>
        <dbReference type="HAMAP-Rule" id="MF_04004"/>
    </source>
</evidence>
<feature type="chain" id="PRO_0000133455" description="Protein E7">
    <location>
        <begin position="1"/>
        <end position="96"/>
    </location>
</feature>
<feature type="zinc finger region" evidence="1">
    <location>
        <begin position="50"/>
        <end position="86"/>
    </location>
</feature>
<feature type="region of interest" description="E7 terminal domain" evidence="1">
    <location>
        <begin position="1"/>
        <end position="42"/>
    </location>
</feature>
<feature type="short sequence motif" description="Nuclear export signal" evidence="1">
    <location>
        <begin position="68"/>
        <end position="76"/>
    </location>
</feature>
<gene>
    <name evidence="1" type="primary">E7</name>
</gene>
<organismHost>
    <name type="scientific">Homo sapiens</name>
    <name type="common">Human</name>
    <dbReference type="NCBI Taxonomy" id="9606"/>
</organismHost>
<organism>
    <name type="scientific">Human papillomavirus type 60</name>
    <dbReference type="NCBI Taxonomy" id="40540"/>
    <lineage>
        <taxon>Viruses</taxon>
        <taxon>Monodnaviria</taxon>
        <taxon>Shotokuvirae</taxon>
        <taxon>Cossaviricota</taxon>
        <taxon>Papovaviricetes</taxon>
        <taxon>Zurhausenvirales</taxon>
        <taxon>Papillomaviridae</taxon>
        <taxon>Firstpapillomavirinae</taxon>
        <taxon>Gammapapillomavirus</taxon>
        <taxon>Gammapapillomavirus 4</taxon>
    </lineage>
</organism>
<reference key="1">
    <citation type="submission" date="1995-10" db="EMBL/GenBank/DDBJ databases">
        <authorList>
            <person name="Delius H."/>
        </authorList>
    </citation>
    <scope>NUCLEOTIDE SEQUENCE [GENOMIC DNA]</scope>
</reference>
<reference key="2">
    <citation type="journal article" date="2002" name="Rev. Med. Virol.">
        <title>Interactions of SV40 large T antigen and other viral proteins with retinoblastoma tumour suppressor.</title>
        <authorList>
            <person name="Lee C."/>
            <person name="Cho Y."/>
        </authorList>
    </citation>
    <scope>REVIEW</scope>
</reference>
<proteinExistence type="inferred from homology"/>
<keyword id="KW-0010">Activator</keyword>
<keyword id="KW-0238">DNA-binding</keyword>
<keyword id="KW-0244">Early protein</keyword>
<keyword id="KW-1078">G1/S host cell cycle checkpoint dysregulation by virus</keyword>
<keyword id="KW-1035">Host cytoplasm</keyword>
<keyword id="KW-1048">Host nucleus</keyword>
<keyword id="KW-0945">Host-virus interaction</keyword>
<keyword id="KW-1090">Inhibition of host innate immune response by virus</keyword>
<keyword id="KW-1114">Inhibition of host interferon signaling pathway by virus</keyword>
<keyword id="KW-0922">Interferon antiviral system evasion</keyword>
<keyword id="KW-0479">Metal-binding</keyword>
<keyword id="KW-1121">Modulation of host cell cycle by virus</keyword>
<keyword id="KW-0553">Oncogene</keyword>
<keyword id="KW-1185">Reference proteome</keyword>
<keyword id="KW-0804">Transcription</keyword>
<keyword id="KW-0805">Transcription regulation</keyword>
<keyword id="KW-0899">Viral immunoevasion</keyword>
<keyword id="KW-0862">Zinc</keyword>
<keyword id="KW-0863">Zinc-finger</keyword>
<protein>
    <recommendedName>
        <fullName evidence="1">Protein E7</fullName>
    </recommendedName>
</protein>
<sequence>MIGNQPNVNNLDVNLEELVLPVSLLADEELSPDGDPEEEEHYPYTIDTCCKPCGAGVRFTIIATPSAVITLRQLLLQEVFLTCLRCSRSLFRHGRS</sequence>
<comment type="function">
    <text evidence="1">Plays a role in viral genome replication by driving entry of quiescent cells into the cell cycle. Stimulation of progression from G1 to S phase allows the virus to efficiently use the cellular DNA replicating machinery to achieve viral genome replication. E7 protein has both transforming and trans-activating activities. Induces the disassembly of the E2F1 transcription factor from RB1, with subsequent transcriptional activation of E2F1-regulated S-phase genes. Interferes with host histone deacetylation mediated by HDAC1 and HDAC2, leading to transcription activation. Also plays a role in the inhibition of both antiviral and antiproliferative functions of host interferon alpha. Interaction with host TMEM173/STING impairs the ability of TMEM173/STING to sense cytosolic DNA and promote the production of type I interferon (IFN-alpha and IFN-beta).</text>
</comment>
<comment type="subunit">
    <text evidence="1">Homodimer. Homooligomer. Interacts with host RB1; this interaction induces dissociation of RB1-E2F1 complex thereby disrupting RB1 activity. Interacts with host EP300; this interaction represses EP300 transcriptional activity. Interacts with protein E2; this interaction inhibits E7 oncogenic activity. Interacts with host TMEM173/STING; this interaction impairs the ability of TMEM173/STING to sense cytosolic DNA and promote the production of type I interferon (IFN-alpha and IFN-beta).</text>
</comment>
<comment type="subcellular location">
    <subcellularLocation>
        <location evidence="1">Host cytoplasm</location>
    </subcellularLocation>
    <subcellularLocation>
        <location evidence="1">Host nucleus</location>
    </subcellularLocation>
    <text evidence="1">Predominantly found in the host nucleus.</text>
</comment>
<comment type="domain">
    <text evidence="1">The E7 terminal domain is an intrinsically disordered domain, whose flexibility and conformational transitions confer target adaptability to the oncoprotein. It allows adaptation to a variety of protein targets and exposes the PEST degradation sequence that regulates its turnover in the cell.</text>
</comment>
<comment type="PTM">
    <text evidence="1">Highly phosphorylated.</text>
</comment>
<comment type="similarity">
    <text evidence="1">Belongs to the papillomaviridae E7 protein family.</text>
</comment>
<name>VE7_HPV60</name>
<dbReference type="EMBL" id="U31792">
    <property type="protein sequence ID" value="AAA79486.1"/>
    <property type="molecule type" value="Genomic_DNA"/>
</dbReference>
<dbReference type="RefSeq" id="NP_043438.1">
    <property type="nucleotide sequence ID" value="NC_001693.1"/>
</dbReference>
<dbReference type="SMR" id="Q80942"/>
<dbReference type="GeneID" id="1403639"/>
<dbReference type="KEGG" id="vg:1403639"/>
<dbReference type="OrthoDB" id="28045at10239"/>
<dbReference type="Proteomes" id="UP000120507">
    <property type="component" value="Genome"/>
</dbReference>
<dbReference type="GO" id="GO:0030430">
    <property type="term" value="C:host cell cytoplasm"/>
    <property type="evidence" value="ECO:0007669"/>
    <property type="project" value="UniProtKB-SubCell"/>
</dbReference>
<dbReference type="GO" id="GO:0042025">
    <property type="term" value="C:host cell nucleus"/>
    <property type="evidence" value="ECO:0007669"/>
    <property type="project" value="UniProtKB-SubCell"/>
</dbReference>
<dbReference type="GO" id="GO:0003677">
    <property type="term" value="F:DNA binding"/>
    <property type="evidence" value="ECO:0007669"/>
    <property type="project" value="UniProtKB-UniRule"/>
</dbReference>
<dbReference type="GO" id="GO:0003700">
    <property type="term" value="F:DNA-binding transcription factor activity"/>
    <property type="evidence" value="ECO:0007669"/>
    <property type="project" value="UniProtKB-UniRule"/>
</dbReference>
<dbReference type="GO" id="GO:0019904">
    <property type="term" value="F:protein domain specific binding"/>
    <property type="evidence" value="ECO:0007669"/>
    <property type="project" value="UniProtKB-UniRule"/>
</dbReference>
<dbReference type="GO" id="GO:0008270">
    <property type="term" value="F:zinc ion binding"/>
    <property type="evidence" value="ECO:0007669"/>
    <property type="project" value="UniProtKB-KW"/>
</dbReference>
<dbReference type="GO" id="GO:0006351">
    <property type="term" value="P:DNA-templated transcription"/>
    <property type="evidence" value="ECO:0007669"/>
    <property type="project" value="UniProtKB-UniRule"/>
</dbReference>
<dbReference type="GO" id="GO:0039645">
    <property type="term" value="P:symbiont-mediated perturbation of host cell cycle G1/S transition checkpoint"/>
    <property type="evidence" value="ECO:0007669"/>
    <property type="project" value="UniProtKB-UniRule"/>
</dbReference>
<dbReference type="GO" id="GO:0052170">
    <property type="term" value="P:symbiont-mediated suppression of host innate immune response"/>
    <property type="evidence" value="ECO:0007669"/>
    <property type="project" value="UniProtKB-KW"/>
</dbReference>
<dbReference type="GO" id="GO:0039502">
    <property type="term" value="P:symbiont-mediated suppression of host type I interferon-mediated signaling pathway"/>
    <property type="evidence" value="ECO:0007669"/>
    <property type="project" value="UniProtKB-UniRule"/>
</dbReference>
<dbReference type="Gene3D" id="3.30.160.330">
    <property type="match status" value="1"/>
</dbReference>
<dbReference type="HAMAP" id="MF_04004">
    <property type="entry name" value="PPV_E7"/>
    <property type="match status" value="1"/>
</dbReference>
<dbReference type="InterPro" id="IPR000148">
    <property type="entry name" value="Papilloma_E7"/>
</dbReference>
<dbReference type="Pfam" id="PF00527">
    <property type="entry name" value="E7"/>
    <property type="match status" value="1"/>
</dbReference>
<dbReference type="PIRSF" id="PIRSF003407">
    <property type="entry name" value="Papvi_E7"/>
    <property type="match status" value="1"/>
</dbReference>
<dbReference type="SUPFAM" id="SSF161234">
    <property type="entry name" value="E7 C-terminal domain-like"/>
    <property type="match status" value="1"/>
</dbReference>